<accession>Q8PT10</accession>
<protein>
    <recommendedName>
        <fullName evidence="2">5-formaminoimidazole-4-carboxamide-1-(beta)-D-ribofuranosyl 5'-monophosphate synthetase 2</fullName>
        <ecNumber evidence="2">6.3.4.23</ecNumber>
    </recommendedName>
    <alternativeName>
        <fullName evidence="2">5-aminoimidazole-4-carboxamide-1-beta-D-ribofuranosyl 5'-monophosphate--formate ligase 2</fullName>
    </alternativeName>
</protein>
<proteinExistence type="inferred from homology"/>
<dbReference type="EC" id="6.3.4.23" evidence="2"/>
<dbReference type="EMBL" id="AE008384">
    <property type="protein sequence ID" value="AAM32609.1"/>
    <property type="molecule type" value="Genomic_DNA"/>
</dbReference>
<dbReference type="RefSeq" id="WP_011034815.1">
    <property type="nucleotide sequence ID" value="NC_003901.1"/>
</dbReference>
<dbReference type="SMR" id="Q8PT10"/>
<dbReference type="KEGG" id="mma:MM_2913"/>
<dbReference type="PATRIC" id="fig|192952.21.peg.3366"/>
<dbReference type="eggNOG" id="arCOG04346">
    <property type="taxonomic scope" value="Archaea"/>
</dbReference>
<dbReference type="HOGENOM" id="CLU_065084_0_0_2"/>
<dbReference type="UniPathway" id="UPA00074">
    <property type="reaction ID" value="UER00134"/>
</dbReference>
<dbReference type="Proteomes" id="UP000000595">
    <property type="component" value="Chromosome"/>
</dbReference>
<dbReference type="GO" id="GO:0005524">
    <property type="term" value="F:ATP binding"/>
    <property type="evidence" value="ECO:0007669"/>
    <property type="project" value="UniProtKB-KW"/>
</dbReference>
<dbReference type="GO" id="GO:0016879">
    <property type="term" value="F:ligase activity, forming carbon-nitrogen bonds"/>
    <property type="evidence" value="ECO:0007669"/>
    <property type="project" value="UniProtKB-UniRule"/>
</dbReference>
<dbReference type="GO" id="GO:0000287">
    <property type="term" value="F:magnesium ion binding"/>
    <property type="evidence" value="ECO:0007669"/>
    <property type="project" value="InterPro"/>
</dbReference>
<dbReference type="GO" id="GO:0006189">
    <property type="term" value="P:'de novo' IMP biosynthetic process"/>
    <property type="evidence" value="ECO:0007669"/>
    <property type="project" value="UniProtKB-UniRule"/>
</dbReference>
<dbReference type="Gene3D" id="3.40.50.20">
    <property type="match status" value="1"/>
</dbReference>
<dbReference type="Gene3D" id="3.30.1490.20">
    <property type="entry name" value="ATP-grasp fold, A domain"/>
    <property type="match status" value="1"/>
</dbReference>
<dbReference type="Gene3D" id="3.30.470.20">
    <property type="entry name" value="ATP-grasp fold, B domain"/>
    <property type="match status" value="1"/>
</dbReference>
<dbReference type="HAMAP" id="MF_01163">
    <property type="entry name" value="IMP_biosynth_PurP"/>
    <property type="match status" value="1"/>
</dbReference>
<dbReference type="InterPro" id="IPR011761">
    <property type="entry name" value="ATP-grasp"/>
</dbReference>
<dbReference type="InterPro" id="IPR013815">
    <property type="entry name" value="ATP_grasp_subdomain_1"/>
</dbReference>
<dbReference type="InterPro" id="IPR023656">
    <property type="entry name" value="IMP_biosynth_PurP"/>
</dbReference>
<dbReference type="InterPro" id="IPR009720">
    <property type="entry name" value="IMP_biosynth_PurP_C"/>
</dbReference>
<dbReference type="InterPro" id="IPR010672">
    <property type="entry name" value="IMP_biosynth_PurP_N"/>
</dbReference>
<dbReference type="InterPro" id="IPR016185">
    <property type="entry name" value="PreATP-grasp_dom_sf"/>
</dbReference>
<dbReference type="NCBIfam" id="NF009781">
    <property type="entry name" value="PRK13278.1-6"/>
    <property type="match status" value="1"/>
</dbReference>
<dbReference type="PANTHER" id="PTHR38147:SF2">
    <property type="entry name" value="5-FORMAMINOIMIDAZOLE-4-CARBOXAMIDE-1-(BETA)-D-RIBOFURANOSYL 5'-MONOPHOSPHATE SYNTHETASE"/>
    <property type="match status" value="1"/>
</dbReference>
<dbReference type="PANTHER" id="PTHR38147">
    <property type="entry name" value="5-FORMAMINOIMIDAZOLE-4-CARBOXAMIDE-1-(BETA)-D-RIBOFURANOSYL 5'-MONOPHOSPHATE SYNTHETASE-RELATED"/>
    <property type="match status" value="1"/>
</dbReference>
<dbReference type="Pfam" id="PF06849">
    <property type="entry name" value="DUF1246"/>
    <property type="match status" value="1"/>
</dbReference>
<dbReference type="Pfam" id="PF06973">
    <property type="entry name" value="DUF1297"/>
    <property type="match status" value="1"/>
</dbReference>
<dbReference type="PIRSF" id="PIRSF004602">
    <property type="entry name" value="ATPgrasp_PurP"/>
    <property type="match status" value="1"/>
</dbReference>
<dbReference type="SUPFAM" id="SSF56059">
    <property type="entry name" value="Glutathione synthetase ATP-binding domain-like"/>
    <property type="match status" value="1"/>
</dbReference>
<dbReference type="SUPFAM" id="SSF52440">
    <property type="entry name" value="PreATP-grasp domain"/>
    <property type="match status" value="1"/>
</dbReference>
<dbReference type="PROSITE" id="PS50975">
    <property type="entry name" value="ATP_GRASP"/>
    <property type="match status" value="1"/>
</dbReference>
<feature type="chain" id="PRO_0000348628" description="5-formaminoimidazole-4-carboxamide-1-(beta)-D-ribofuranosyl 5'-monophosphate synthetase 2">
    <location>
        <begin position="1"/>
        <end position="356"/>
    </location>
</feature>
<feature type="domain" description="ATP-grasp" evidence="2">
    <location>
        <begin position="101"/>
        <end position="333"/>
    </location>
</feature>
<feature type="binding site" evidence="2">
    <location>
        <position position="27"/>
    </location>
    <ligand>
        <name>5-amino-1-(5-phospho-beta-D-ribosyl)imidazole-4-carboxamide</name>
        <dbReference type="ChEBI" id="CHEBI:58475"/>
    </ligand>
</feature>
<feature type="binding site" evidence="2">
    <location>
        <position position="94"/>
    </location>
    <ligand>
        <name>5-amino-1-(5-phospho-beta-D-ribosyl)imidazole-4-carboxamide</name>
        <dbReference type="ChEBI" id="CHEBI:58475"/>
    </ligand>
</feature>
<feature type="binding site" evidence="2">
    <location>
        <begin position="145"/>
        <end position="196"/>
    </location>
    <ligand>
        <name>ATP</name>
        <dbReference type="ChEBI" id="CHEBI:30616"/>
    </ligand>
</feature>
<feature type="binding site" evidence="2">
    <location>
        <position position="226"/>
    </location>
    <ligand>
        <name>ATP</name>
        <dbReference type="ChEBI" id="CHEBI:30616"/>
    </ligand>
</feature>
<feature type="binding site" evidence="2">
    <location>
        <position position="255"/>
    </location>
    <ligand>
        <name>5-amino-1-(5-phospho-beta-D-ribosyl)imidazole-4-carboxamide</name>
        <dbReference type="ChEBI" id="CHEBI:58475"/>
    </ligand>
</feature>
<feature type="binding site" evidence="2">
    <location>
        <position position="293"/>
    </location>
    <ligand>
        <name>Mg(2+)</name>
        <dbReference type="ChEBI" id="CHEBI:18420"/>
    </ligand>
</feature>
<feature type="binding site" evidence="2">
    <location>
        <position position="306"/>
    </location>
    <ligand>
        <name>Mg(2+)</name>
        <dbReference type="ChEBI" id="CHEBI:18420"/>
    </ligand>
</feature>
<comment type="function">
    <text evidence="2">Catalyzes the ATP- and formate-dependent formylation of 5-aminoimidazole-4-carboxamide-1-beta-d-ribofuranosyl 5'-monophosphate (AICAR) to 5-formaminoimidazole-4-carboxamide-1-beta-d-ribofuranosyl 5'-monophosphate (FAICAR) in the absence of folates.</text>
</comment>
<comment type="catalytic activity">
    <reaction evidence="2">
        <text>5-amino-1-(5-phospho-beta-D-ribosyl)imidazole-4-carboxamide + formate + ATP = 5-formamido-1-(5-phospho-D-ribosyl)imidazole-4-carboxamide + ADP + phosphate</text>
        <dbReference type="Rhea" id="RHEA:24836"/>
        <dbReference type="ChEBI" id="CHEBI:15740"/>
        <dbReference type="ChEBI" id="CHEBI:30616"/>
        <dbReference type="ChEBI" id="CHEBI:43474"/>
        <dbReference type="ChEBI" id="CHEBI:58467"/>
        <dbReference type="ChEBI" id="CHEBI:58475"/>
        <dbReference type="ChEBI" id="CHEBI:456216"/>
        <dbReference type="EC" id="6.3.4.23"/>
    </reaction>
</comment>
<comment type="cofactor">
    <cofactor evidence="1">
        <name>Mg(2+)</name>
        <dbReference type="ChEBI" id="CHEBI:18420"/>
    </cofactor>
    <cofactor evidence="1">
        <name>Mn(2+)</name>
        <dbReference type="ChEBI" id="CHEBI:29035"/>
    </cofactor>
    <text evidence="1">Binds 1 Mg(2+) or Mn(2+) ion per subunit.</text>
</comment>
<comment type="pathway">
    <text evidence="2">Purine metabolism; IMP biosynthesis via de novo pathway; 5-formamido-1-(5-phospho-D-ribosyl)imidazole-4-carboxamide from 5-amino-1-(5-phospho-D-ribosyl)imidazole-4-carboxamide (formate route): step 1/1.</text>
</comment>
<comment type="similarity">
    <text evidence="2">Belongs to the phosphohexose mutase family.</text>
</comment>
<reference key="1">
    <citation type="journal article" date="2002" name="J. Mol. Microbiol. Biotechnol.">
        <title>The genome of Methanosarcina mazei: evidence for lateral gene transfer between Bacteria and Archaea.</title>
        <authorList>
            <person name="Deppenmeier U."/>
            <person name="Johann A."/>
            <person name="Hartsch T."/>
            <person name="Merkl R."/>
            <person name="Schmitz R.A."/>
            <person name="Martinez-Arias R."/>
            <person name="Henne A."/>
            <person name="Wiezer A."/>
            <person name="Baeumer S."/>
            <person name="Jacobi C."/>
            <person name="Brueggemann H."/>
            <person name="Lienard T."/>
            <person name="Christmann A."/>
            <person name="Boemecke M."/>
            <person name="Steckel S."/>
            <person name="Bhattacharyya A."/>
            <person name="Lykidis A."/>
            <person name="Overbeek R."/>
            <person name="Klenk H.-P."/>
            <person name="Gunsalus R.P."/>
            <person name="Fritz H.-J."/>
            <person name="Gottschalk G."/>
        </authorList>
    </citation>
    <scope>NUCLEOTIDE SEQUENCE [LARGE SCALE GENOMIC DNA]</scope>
    <source>
        <strain>ATCC BAA-159 / DSM 3647 / Goe1 / Go1 / JCM 11833 / OCM 88</strain>
    </source>
</reference>
<organism>
    <name type="scientific">Methanosarcina mazei (strain ATCC BAA-159 / DSM 3647 / Goe1 / Go1 / JCM 11833 / OCM 88)</name>
    <name type="common">Methanosarcina frisia</name>
    <dbReference type="NCBI Taxonomy" id="192952"/>
    <lineage>
        <taxon>Archaea</taxon>
        <taxon>Methanobacteriati</taxon>
        <taxon>Methanobacteriota</taxon>
        <taxon>Stenosarchaea group</taxon>
        <taxon>Methanomicrobia</taxon>
        <taxon>Methanosarcinales</taxon>
        <taxon>Methanosarcinaceae</taxon>
        <taxon>Methanosarcina</taxon>
    </lineage>
</organism>
<keyword id="KW-0067">ATP-binding</keyword>
<keyword id="KW-0436">Ligase</keyword>
<keyword id="KW-0460">Magnesium</keyword>
<keyword id="KW-0464">Manganese</keyword>
<keyword id="KW-0479">Metal-binding</keyword>
<keyword id="KW-0547">Nucleotide-binding</keyword>
<keyword id="KW-0658">Purine biosynthesis</keyword>
<evidence type="ECO:0000250" key="1"/>
<evidence type="ECO:0000255" key="2">
    <source>
        <dbReference type="HAMAP-Rule" id="MF_01163"/>
    </source>
</evidence>
<gene>
    <name evidence="2" type="primary">purP2</name>
    <name type="ordered locus">MM_2913</name>
</gene>
<name>PURP2_METMA</name>
<sequence>MITKQQVLEFLKDYDLDNITIATICSHSSLQIFDGARKEGFRTLGICVGKPPKFYDAFPRAKPDEYLVLEDYEDLINRAEELRKKNTIIIPHSSLIYYLGRENFTGMAVPTFGNRTSIEWESDRDKESRWFLGAGIQMPKKIDDPHDIKGPVMVEYEGAKGGKGFFVAKNYKEFSELVDHTQKYTIHEYINGTRYDLHYFYSPIRNDGYTLSKGSLELLSMDRRVESNADEIFRLGSPRELIESGICPTYVLTGNVPLVARESILSRIFSLGEQVVEESLALFGGITGAFCIEAVITDSLDIKVFELSSRIVSGTNLYISGSPYSDLMQKRLSTGRRIALEIKEAAKSNQLDKILS</sequence>